<dbReference type="EC" id="2.3.1.234" evidence="1"/>
<dbReference type="EMBL" id="CP000110">
    <property type="protein sequence ID" value="ABB34409.1"/>
    <property type="molecule type" value="Genomic_DNA"/>
</dbReference>
<dbReference type="RefSeq" id="WP_011363637.1">
    <property type="nucleotide sequence ID" value="NC_007516.1"/>
</dbReference>
<dbReference type="SMR" id="Q3ALX3"/>
<dbReference type="STRING" id="110662.Syncc9605_0635"/>
<dbReference type="KEGG" id="syd:Syncc9605_0635"/>
<dbReference type="eggNOG" id="COG0533">
    <property type="taxonomic scope" value="Bacteria"/>
</dbReference>
<dbReference type="HOGENOM" id="CLU_023208_0_2_3"/>
<dbReference type="OrthoDB" id="9806197at2"/>
<dbReference type="GO" id="GO:0005737">
    <property type="term" value="C:cytoplasm"/>
    <property type="evidence" value="ECO:0007669"/>
    <property type="project" value="UniProtKB-SubCell"/>
</dbReference>
<dbReference type="GO" id="GO:0005506">
    <property type="term" value="F:iron ion binding"/>
    <property type="evidence" value="ECO:0007669"/>
    <property type="project" value="UniProtKB-UniRule"/>
</dbReference>
<dbReference type="GO" id="GO:0061711">
    <property type="term" value="F:N(6)-L-threonylcarbamoyladenine synthase activity"/>
    <property type="evidence" value="ECO:0007669"/>
    <property type="project" value="UniProtKB-EC"/>
</dbReference>
<dbReference type="GO" id="GO:0002949">
    <property type="term" value="P:tRNA threonylcarbamoyladenosine modification"/>
    <property type="evidence" value="ECO:0007669"/>
    <property type="project" value="UniProtKB-UniRule"/>
</dbReference>
<dbReference type="CDD" id="cd24133">
    <property type="entry name" value="ASKHA_NBD_TsaD_bac"/>
    <property type="match status" value="1"/>
</dbReference>
<dbReference type="FunFam" id="3.30.420.40:FF:000012">
    <property type="entry name" value="tRNA N6-adenosine threonylcarbamoyltransferase"/>
    <property type="match status" value="1"/>
</dbReference>
<dbReference type="FunFam" id="3.30.420.40:FF:000040">
    <property type="entry name" value="tRNA N6-adenosine threonylcarbamoyltransferase"/>
    <property type="match status" value="1"/>
</dbReference>
<dbReference type="Gene3D" id="3.30.420.40">
    <property type="match status" value="2"/>
</dbReference>
<dbReference type="HAMAP" id="MF_01445">
    <property type="entry name" value="TsaD"/>
    <property type="match status" value="1"/>
</dbReference>
<dbReference type="InterPro" id="IPR043129">
    <property type="entry name" value="ATPase_NBD"/>
</dbReference>
<dbReference type="InterPro" id="IPR000905">
    <property type="entry name" value="Gcp-like_dom"/>
</dbReference>
<dbReference type="InterPro" id="IPR017861">
    <property type="entry name" value="KAE1/TsaD"/>
</dbReference>
<dbReference type="InterPro" id="IPR017860">
    <property type="entry name" value="Peptidase_M22_CS"/>
</dbReference>
<dbReference type="InterPro" id="IPR022450">
    <property type="entry name" value="TsaD"/>
</dbReference>
<dbReference type="NCBIfam" id="TIGR00329">
    <property type="entry name" value="gcp_kae1"/>
    <property type="match status" value="1"/>
</dbReference>
<dbReference type="NCBIfam" id="TIGR03723">
    <property type="entry name" value="T6A_TsaD_YgjD"/>
    <property type="match status" value="1"/>
</dbReference>
<dbReference type="PANTHER" id="PTHR11735">
    <property type="entry name" value="TRNA N6-ADENOSINE THREONYLCARBAMOYLTRANSFERASE"/>
    <property type="match status" value="1"/>
</dbReference>
<dbReference type="PANTHER" id="PTHR11735:SF6">
    <property type="entry name" value="TRNA N6-ADENOSINE THREONYLCARBAMOYLTRANSFERASE, MITOCHONDRIAL"/>
    <property type="match status" value="1"/>
</dbReference>
<dbReference type="Pfam" id="PF00814">
    <property type="entry name" value="TsaD"/>
    <property type="match status" value="1"/>
</dbReference>
<dbReference type="PRINTS" id="PR00789">
    <property type="entry name" value="OSIALOPTASE"/>
</dbReference>
<dbReference type="SUPFAM" id="SSF53067">
    <property type="entry name" value="Actin-like ATPase domain"/>
    <property type="match status" value="2"/>
</dbReference>
<dbReference type="PROSITE" id="PS01016">
    <property type="entry name" value="GLYCOPROTEASE"/>
    <property type="match status" value="1"/>
</dbReference>
<comment type="function">
    <text evidence="1">Required for the formation of a threonylcarbamoyl group on adenosine at position 37 (t(6)A37) in tRNAs that read codons beginning with adenine. Is involved in the transfer of the threonylcarbamoyl moiety of threonylcarbamoyl-AMP (TC-AMP) to the N6 group of A37, together with TsaE and TsaB. TsaD likely plays a direct catalytic role in this reaction.</text>
</comment>
<comment type="catalytic activity">
    <reaction evidence="1">
        <text>L-threonylcarbamoyladenylate + adenosine(37) in tRNA = N(6)-L-threonylcarbamoyladenosine(37) in tRNA + AMP + H(+)</text>
        <dbReference type="Rhea" id="RHEA:37059"/>
        <dbReference type="Rhea" id="RHEA-COMP:10162"/>
        <dbReference type="Rhea" id="RHEA-COMP:10163"/>
        <dbReference type="ChEBI" id="CHEBI:15378"/>
        <dbReference type="ChEBI" id="CHEBI:73682"/>
        <dbReference type="ChEBI" id="CHEBI:74411"/>
        <dbReference type="ChEBI" id="CHEBI:74418"/>
        <dbReference type="ChEBI" id="CHEBI:456215"/>
        <dbReference type="EC" id="2.3.1.234"/>
    </reaction>
</comment>
<comment type="cofactor">
    <cofactor evidence="1">
        <name>Fe(2+)</name>
        <dbReference type="ChEBI" id="CHEBI:29033"/>
    </cofactor>
    <text evidence="1">Binds 1 Fe(2+) ion per subunit.</text>
</comment>
<comment type="subcellular location">
    <subcellularLocation>
        <location evidence="1">Cytoplasm</location>
    </subcellularLocation>
</comment>
<comment type="similarity">
    <text evidence="1">Belongs to the KAE1 / TsaD family.</text>
</comment>
<organism>
    <name type="scientific">Synechococcus sp. (strain CC9605)</name>
    <dbReference type="NCBI Taxonomy" id="110662"/>
    <lineage>
        <taxon>Bacteria</taxon>
        <taxon>Bacillati</taxon>
        <taxon>Cyanobacteriota</taxon>
        <taxon>Cyanophyceae</taxon>
        <taxon>Synechococcales</taxon>
        <taxon>Synechococcaceae</taxon>
        <taxon>Synechococcus</taxon>
    </lineage>
</organism>
<sequence>MHAVLALETSCDESAAAVLRRHADGRIDVLASRIASQVEEHARWGGVVPEIASRRHVEALPGLVEAVVDEAGVTLGQLDAIAATITPGLAGALMVASVTGRTLAALHQRPFLGVHHLEGHLASVMLGDVPQQAPYLVLLVSGGHTELILVAEDGGMTRLGRSHDDAAGEAFDKVARLLGLGYPGGPAIQAVAETGDATRFRLPKGRISLPGGGFHPYDFSFSGLKTAMLRTVETLRQTTDSLPLADLAASFEQVVADVLVQRSLRCAADHGVQQLVMVGGVAANRRLRQSMLEQGNQRGIAVSIAPLAFCTDNAAMIGAAALMRLGQNAACTSFESGVAARWPLDQANALYTPDPPF</sequence>
<gene>
    <name evidence="1" type="primary">tsaD</name>
    <name type="synonym">gcp</name>
    <name type="ordered locus">Syncc9605_0635</name>
</gene>
<name>TSAD_SYNSC</name>
<protein>
    <recommendedName>
        <fullName evidence="1">tRNA N6-adenosine threonylcarbamoyltransferase</fullName>
        <ecNumber evidence="1">2.3.1.234</ecNumber>
    </recommendedName>
    <alternativeName>
        <fullName evidence="1">N6-L-threonylcarbamoyladenine synthase</fullName>
        <shortName evidence="1">t(6)A synthase</shortName>
    </alternativeName>
    <alternativeName>
        <fullName evidence="1">t(6)A37 threonylcarbamoyladenosine biosynthesis protein TsaD</fullName>
    </alternativeName>
    <alternativeName>
        <fullName evidence="1">tRNA threonylcarbamoyladenosine biosynthesis protein TsaD</fullName>
    </alternativeName>
</protein>
<evidence type="ECO:0000255" key="1">
    <source>
        <dbReference type="HAMAP-Rule" id="MF_01445"/>
    </source>
</evidence>
<reference key="1">
    <citation type="submission" date="2005-07" db="EMBL/GenBank/DDBJ databases">
        <title>Complete sequence of Synechococcus sp. CC9605.</title>
        <authorList>
            <consortium name="US DOE Joint Genome Institute"/>
            <person name="Copeland A."/>
            <person name="Lucas S."/>
            <person name="Lapidus A."/>
            <person name="Barry K."/>
            <person name="Detter J.C."/>
            <person name="Glavina T."/>
            <person name="Hammon N."/>
            <person name="Israni S."/>
            <person name="Pitluck S."/>
            <person name="Schmutz J."/>
            <person name="Martinez M."/>
            <person name="Larimer F."/>
            <person name="Land M."/>
            <person name="Kyrpides N."/>
            <person name="Ivanova N."/>
            <person name="Richardson P."/>
        </authorList>
    </citation>
    <scope>NUCLEOTIDE SEQUENCE [LARGE SCALE GENOMIC DNA]</scope>
    <source>
        <strain>CC9605</strain>
    </source>
</reference>
<accession>Q3ALX3</accession>
<feature type="chain" id="PRO_0000303584" description="tRNA N6-adenosine threonylcarbamoyltransferase">
    <location>
        <begin position="1"/>
        <end position="357"/>
    </location>
</feature>
<feature type="binding site" evidence="1">
    <location>
        <position position="116"/>
    </location>
    <ligand>
        <name>Fe cation</name>
        <dbReference type="ChEBI" id="CHEBI:24875"/>
    </ligand>
</feature>
<feature type="binding site" evidence="1">
    <location>
        <position position="120"/>
    </location>
    <ligand>
        <name>Fe cation</name>
        <dbReference type="ChEBI" id="CHEBI:24875"/>
    </ligand>
</feature>
<feature type="binding site" evidence="1">
    <location>
        <begin position="139"/>
        <end position="143"/>
    </location>
    <ligand>
        <name>substrate</name>
    </ligand>
</feature>
<feature type="binding site" evidence="1">
    <location>
        <position position="172"/>
    </location>
    <ligand>
        <name>substrate</name>
    </ligand>
</feature>
<feature type="binding site" evidence="1">
    <location>
        <position position="185"/>
    </location>
    <ligand>
        <name>substrate</name>
    </ligand>
</feature>
<feature type="binding site" evidence="1">
    <location>
        <position position="284"/>
    </location>
    <ligand>
        <name>substrate</name>
    </ligand>
</feature>
<feature type="binding site" evidence="1">
    <location>
        <position position="312"/>
    </location>
    <ligand>
        <name>Fe cation</name>
        <dbReference type="ChEBI" id="CHEBI:24875"/>
    </ligand>
</feature>
<proteinExistence type="inferred from homology"/>
<keyword id="KW-0012">Acyltransferase</keyword>
<keyword id="KW-0963">Cytoplasm</keyword>
<keyword id="KW-0408">Iron</keyword>
<keyword id="KW-0479">Metal-binding</keyword>
<keyword id="KW-0808">Transferase</keyword>
<keyword id="KW-0819">tRNA processing</keyword>